<reference key="1">
    <citation type="journal article" date="2005" name="Cell. Mol. Life Sci.">
        <title>DNG1, a Dictyostelium homologue of tumor suppressor ING1 regulates differentiation of Dictyostelium cells.</title>
        <authorList>
            <person name="Mayanagi T."/>
            <person name="Amagai A."/>
            <person name="Maeda Y."/>
        </authorList>
    </citation>
    <scope>NUCLEOTIDE SEQUENCE [MRNA]</scope>
    <scope>FUNCTION</scope>
    <scope>SUBCELLULAR LOCATION</scope>
    <scope>DEVELOPMENTAL STAGE</scope>
    <scope>DISRUPTION PHENOTYPE</scope>
    <source>
        <strain>AX2</strain>
    </source>
</reference>
<reference key="2">
    <citation type="journal article" date="2005" name="Nature">
        <title>The genome of the social amoeba Dictyostelium discoideum.</title>
        <authorList>
            <person name="Eichinger L."/>
            <person name="Pachebat J.A."/>
            <person name="Gloeckner G."/>
            <person name="Rajandream M.A."/>
            <person name="Sucgang R."/>
            <person name="Berriman M."/>
            <person name="Song J."/>
            <person name="Olsen R."/>
            <person name="Szafranski K."/>
            <person name="Xu Q."/>
            <person name="Tunggal B."/>
            <person name="Kummerfeld S."/>
            <person name="Madera M."/>
            <person name="Konfortov B.A."/>
            <person name="Rivero F."/>
            <person name="Bankier A.T."/>
            <person name="Lehmann R."/>
            <person name="Hamlin N."/>
            <person name="Davies R."/>
            <person name="Gaudet P."/>
            <person name="Fey P."/>
            <person name="Pilcher K."/>
            <person name="Chen G."/>
            <person name="Saunders D."/>
            <person name="Sodergren E.J."/>
            <person name="Davis P."/>
            <person name="Kerhornou A."/>
            <person name="Nie X."/>
            <person name="Hall N."/>
            <person name="Anjard C."/>
            <person name="Hemphill L."/>
            <person name="Bason N."/>
            <person name="Farbrother P."/>
            <person name="Desany B."/>
            <person name="Just E."/>
            <person name="Morio T."/>
            <person name="Rost R."/>
            <person name="Churcher C.M."/>
            <person name="Cooper J."/>
            <person name="Haydock S."/>
            <person name="van Driessche N."/>
            <person name="Cronin A."/>
            <person name="Goodhead I."/>
            <person name="Muzny D.M."/>
            <person name="Mourier T."/>
            <person name="Pain A."/>
            <person name="Lu M."/>
            <person name="Harper D."/>
            <person name="Lindsay R."/>
            <person name="Hauser H."/>
            <person name="James K.D."/>
            <person name="Quiles M."/>
            <person name="Madan Babu M."/>
            <person name="Saito T."/>
            <person name="Buchrieser C."/>
            <person name="Wardroper A."/>
            <person name="Felder M."/>
            <person name="Thangavelu M."/>
            <person name="Johnson D."/>
            <person name="Knights A."/>
            <person name="Loulseged H."/>
            <person name="Mungall K.L."/>
            <person name="Oliver K."/>
            <person name="Price C."/>
            <person name="Quail M.A."/>
            <person name="Urushihara H."/>
            <person name="Hernandez J."/>
            <person name="Rabbinowitsch E."/>
            <person name="Steffen D."/>
            <person name="Sanders M."/>
            <person name="Ma J."/>
            <person name="Kohara Y."/>
            <person name="Sharp S."/>
            <person name="Simmonds M.N."/>
            <person name="Spiegler S."/>
            <person name="Tivey A."/>
            <person name="Sugano S."/>
            <person name="White B."/>
            <person name="Walker D."/>
            <person name="Woodward J.R."/>
            <person name="Winckler T."/>
            <person name="Tanaka Y."/>
            <person name="Shaulsky G."/>
            <person name="Schleicher M."/>
            <person name="Weinstock G.M."/>
            <person name="Rosenthal A."/>
            <person name="Cox E.C."/>
            <person name="Chisholm R.L."/>
            <person name="Gibbs R.A."/>
            <person name="Loomis W.F."/>
            <person name="Platzer M."/>
            <person name="Kay R.R."/>
            <person name="Williams J.G."/>
            <person name="Dear P.H."/>
            <person name="Noegel A.A."/>
            <person name="Barrell B.G."/>
            <person name="Kuspa A."/>
        </authorList>
    </citation>
    <scope>NUCLEOTIDE SEQUENCE [LARGE SCALE GENOMIC DNA]</scope>
    <source>
        <strain>AX4</strain>
    </source>
</reference>
<dbReference type="EMBL" id="AB194261">
    <property type="protein sequence ID" value="BAD89149.1"/>
    <property type="molecule type" value="mRNA"/>
</dbReference>
<dbReference type="EMBL" id="AAFI01000106">
    <property type="protein sequence ID" value="EAL65254.1"/>
    <property type="molecule type" value="Genomic_DNA"/>
</dbReference>
<dbReference type="RefSeq" id="XP_638615.1">
    <property type="nucleotide sequence ID" value="XM_633523.1"/>
</dbReference>
<dbReference type="SMR" id="Q54PN9"/>
<dbReference type="STRING" id="44689.Q54PN9"/>
<dbReference type="PaxDb" id="44689-DDB0220706"/>
<dbReference type="GeneID" id="8624586"/>
<dbReference type="KEGG" id="ddi:DDB_G0284411"/>
<dbReference type="dictyBase" id="DDB_G0284411">
    <property type="gene designation" value="dng1"/>
</dbReference>
<dbReference type="VEuPathDB" id="AmoebaDB:DDB_G0284411"/>
<dbReference type="eggNOG" id="KOG1973">
    <property type="taxonomic scope" value="Eukaryota"/>
</dbReference>
<dbReference type="HOGENOM" id="CLU_031900_5_1_1"/>
<dbReference type="OMA" id="QPKGKWF"/>
<dbReference type="PhylomeDB" id="Q54PN9"/>
<dbReference type="PRO" id="PR:Q54PN9"/>
<dbReference type="GO" id="GO:0005634">
    <property type="term" value="C:nucleus"/>
    <property type="evidence" value="ECO:0000314"/>
    <property type="project" value="dictyBase"/>
</dbReference>
<dbReference type="GO" id="GO:0032991">
    <property type="term" value="C:protein-containing complex"/>
    <property type="evidence" value="ECO:0000314"/>
    <property type="project" value="dictyBase"/>
</dbReference>
<dbReference type="GO" id="GO:0008270">
    <property type="term" value="F:zinc ion binding"/>
    <property type="evidence" value="ECO:0007669"/>
    <property type="project" value="UniProtKB-KW"/>
</dbReference>
<dbReference type="GO" id="GO:0031152">
    <property type="term" value="P:aggregation involved in sorocarp development"/>
    <property type="evidence" value="ECO:0000315"/>
    <property type="project" value="dictyBase"/>
</dbReference>
<dbReference type="GO" id="GO:0040029">
    <property type="term" value="P:epigenetic regulation of gene expression"/>
    <property type="evidence" value="ECO:0000315"/>
    <property type="project" value="dictyBase"/>
</dbReference>
<dbReference type="CDD" id="cd16859">
    <property type="entry name" value="ING_ING4_5"/>
    <property type="match status" value="1"/>
</dbReference>
<dbReference type="CDD" id="cd15587">
    <property type="entry name" value="PHD_Yng1p_like"/>
    <property type="match status" value="1"/>
</dbReference>
<dbReference type="FunFam" id="3.30.40.10:FF:000016">
    <property type="entry name" value="Inhibitor of growth protein"/>
    <property type="match status" value="1"/>
</dbReference>
<dbReference type="Gene3D" id="6.10.140.1740">
    <property type="match status" value="1"/>
</dbReference>
<dbReference type="Gene3D" id="3.30.40.10">
    <property type="entry name" value="Zinc/RING finger domain, C3HC4 (zinc finger)"/>
    <property type="match status" value="1"/>
</dbReference>
<dbReference type="InterPro" id="IPR028651">
    <property type="entry name" value="ING_fam"/>
</dbReference>
<dbReference type="InterPro" id="IPR024610">
    <property type="entry name" value="ING_N_histone-binding"/>
</dbReference>
<dbReference type="InterPro" id="IPR019786">
    <property type="entry name" value="Zinc_finger_PHD-type_CS"/>
</dbReference>
<dbReference type="InterPro" id="IPR011011">
    <property type="entry name" value="Znf_FYVE_PHD"/>
</dbReference>
<dbReference type="InterPro" id="IPR001965">
    <property type="entry name" value="Znf_PHD"/>
</dbReference>
<dbReference type="InterPro" id="IPR019787">
    <property type="entry name" value="Znf_PHD-finger"/>
</dbReference>
<dbReference type="InterPro" id="IPR013083">
    <property type="entry name" value="Znf_RING/FYVE/PHD"/>
</dbReference>
<dbReference type="PANTHER" id="PTHR10333">
    <property type="entry name" value="INHIBITOR OF GROWTH PROTEIN"/>
    <property type="match status" value="1"/>
</dbReference>
<dbReference type="PANTHER" id="PTHR10333:SF42">
    <property type="entry name" value="INHIBITOR OF GROWTH PROTEIN 5"/>
    <property type="match status" value="1"/>
</dbReference>
<dbReference type="Pfam" id="PF12998">
    <property type="entry name" value="ING"/>
    <property type="match status" value="1"/>
</dbReference>
<dbReference type="Pfam" id="PF23011">
    <property type="entry name" value="PHD-1st_NSD"/>
    <property type="match status" value="1"/>
</dbReference>
<dbReference type="SMART" id="SM01408">
    <property type="entry name" value="ING"/>
    <property type="match status" value="1"/>
</dbReference>
<dbReference type="SMART" id="SM00249">
    <property type="entry name" value="PHD"/>
    <property type="match status" value="1"/>
</dbReference>
<dbReference type="SUPFAM" id="SSF57903">
    <property type="entry name" value="FYVE/PHD zinc finger"/>
    <property type="match status" value="1"/>
</dbReference>
<dbReference type="PROSITE" id="PS01359">
    <property type="entry name" value="ZF_PHD_1"/>
    <property type="match status" value="1"/>
</dbReference>
<dbReference type="PROSITE" id="PS50016">
    <property type="entry name" value="ZF_PHD_2"/>
    <property type="match status" value="1"/>
</dbReference>
<evidence type="ECO:0000250" key="1">
    <source>
        <dbReference type="UniProtKB" id="Q9UK53"/>
    </source>
</evidence>
<evidence type="ECO:0000255" key="2">
    <source>
        <dbReference type="PROSITE-ProRule" id="PRU00146"/>
    </source>
</evidence>
<evidence type="ECO:0000255" key="3">
    <source>
        <dbReference type="RuleBase" id="RU361213"/>
    </source>
</evidence>
<evidence type="ECO:0000256" key="4">
    <source>
        <dbReference type="SAM" id="MobiDB-lite"/>
    </source>
</evidence>
<evidence type="ECO:0000269" key="5">
    <source>
    </source>
</evidence>
<evidence type="ECO:0000303" key="6">
    <source>
    </source>
</evidence>
<evidence type="ECO:0000305" key="7"/>
<evidence type="ECO:0000312" key="8">
    <source>
        <dbReference type="dictyBase" id="DDB_G0284411"/>
    </source>
</evidence>
<name>ING1_DICDI</name>
<organism>
    <name type="scientific">Dictyostelium discoideum</name>
    <name type="common">Social amoeba</name>
    <dbReference type="NCBI Taxonomy" id="44689"/>
    <lineage>
        <taxon>Eukaryota</taxon>
        <taxon>Amoebozoa</taxon>
        <taxon>Evosea</taxon>
        <taxon>Eumycetozoa</taxon>
        <taxon>Dictyostelia</taxon>
        <taxon>Dictyosteliales</taxon>
        <taxon>Dictyosteliaceae</taxon>
        <taxon>Dictyostelium</taxon>
    </lineage>
</organism>
<protein>
    <recommendedName>
        <fullName evidence="7">Inhibitor of growth protein 1 homolog</fullName>
    </recommendedName>
</protein>
<accession>Q54PN9</accession>
<accession>Q5H7A8</accession>
<keyword id="KW-0156">Chromatin regulator</keyword>
<keyword id="KW-0341">Growth regulation</keyword>
<keyword id="KW-0479">Metal-binding</keyword>
<keyword id="KW-0539">Nucleus</keyword>
<keyword id="KW-0804">Transcription</keyword>
<keyword id="KW-0805">Transcription regulation</keyword>
<keyword id="KW-0862">Zinc</keyword>
<keyword id="KW-0863">Zinc-finger</keyword>
<comment type="function">
    <text evidence="5">Involved in regulation of the growth and differentiation transition (GDT) process, probably by regulating gene expression via histone modification.</text>
</comment>
<comment type="subunit">
    <text evidence="3">Interacts with H3K4me3 and to a lesser extent with H3K4me2.</text>
</comment>
<comment type="subcellular location">
    <subcellularLocation>
        <location evidence="3 5">Nucleus</location>
    </subcellularLocation>
</comment>
<comment type="developmental stage">
    <text evidence="5">Constitutively expressed at low level throughout development (at protein level).</text>
</comment>
<comment type="domain">
    <text evidence="3">The PHD-type zinc finger mediates the binding to H3K4me3.</text>
</comment>
<comment type="disruption phenotype">
    <text evidence="5">Cells provided with nutrients proliferate slower than normal. Upon starvation, the progression of differentiation is delayed in a cell density-dependent manner. Cells form tiny aggregates and more aggregation centers compared to wild-type cells, resulting in a higher number of tiny migrating slugs. Cells form complete tiny fruiting bodies 3-4 hours faster than wild-type. In a similar manner to wild-type, most cells remain as non-aggregated single cells in the presence of caffeine, which is an inhibitor of adenylate cyclase activation. Decreased expression of cyclic AMP receptor carA gene and of csaA, a contact site A gene, both of which are expressed early in development. Cells exhibit a disordered change of histone H2B modification compared to wild-type, in which the modification level of histone H2B appears to increase in response to cell differentiation. Adequate histone H1 and H3 modifications are also impaired. Normal uniform distribution of starved cells in aggregation streams, but abnormal distribution of cells in subsequent multicellular structures.</text>
</comment>
<comment type="similarity">
    <text evidence="3 7">Belongs to the ING family.</text>
</comment>
<gene>
    <name evidence="6" type="primary">dng1</name>
    <name evidence="8" type="ORF">DDB_G0284411</name>
</gene>
<sequence>MYQGKGTYLENYLDSISTLPSELGRNFALIRELDYRTSDLVEKIEKLKSNLLVTTNGTRRAVHELTDERASKHIKLEMKQVIEYSDEKVELSNQTYELIDKHIRKLDIDLKKFETELESAEEEKKKKKSKQSQNNSTVESSTTSSSSSSSSSSLSLSSSTNNTSSLNSSSGGGGGGSGGGGGGGGHSSHSTGNKKGKARDSLTSSSSSGNINGMSSSSSSSSSSSSLSSRKQKSMAAQDIASITGNNGDADVRVFNANPNDLDLAIDPNEPTYCFCNRVSFGEMVGCENPDCKIEWFHFECVGLTSTPKGKWYCPDCTRIKVKK</sequence>
<feature type="chain" id="PRO_0000445438" description="Inhibitor of growth protein 1 homolog">
    <location>
        <begin position="1"/>
        <end position="324"/>
    </location>
</feature>
<feature type="zinc finger region" description="PHD-type" evidence="2">
    <location>
        <begin position="271"/>
        <end position="320"/>
    </location>
</feature>
<feature type="region of interest" description="Disordered" evidence="4">
    <location>
        <begin position="120"/>
        <end position="237"/>
    </location>
</feature>
<feature type="compositionally biased region" description="Low complexity" evidence="4">
    <location>
        <begin position="140"/>
        <end position="169"/>
    </location>
</feature>
<feature type="compositionally biased region" description="Gly residues" evidence="4">
    <location>
        <begin position="170"/>
        <end position="186"/>
    </location>
</feature>
<feature type="compositionally biased region" description="Low complexity" evidence="4">
    <location>
        <begin position="201"/>
        <end position="229"/>
    </location>
</feature>
<feature type="binding site" evidence="1">
    <location>
        <position position="274"/>
    </location>
    <ligand>
        <name>Zn(2+)</name>
        <dbReference type="ChEBI" id="CHEBI:29105"/>
        <label>1</label>
    </ligand>
</feature>
<feature type="binding site" evidence="1">
    <location>
        <position position="276"/>
    </location>
    <ligand>
        <name>Zn(2+)</name>
        <dbReference type="ChEBI" id="CHEBI:29105"/>
        <label>1</label>
    </ligand>
</feature>
<feature type="binding site" evidence="1">
    <location>
        <position position="287"/>
    </location>
    <ligand>
        <name>Zn(2+)</name>
        <dbReference type="ChEBI" id="CHEBI:29105"/>
        <label>2</label>
    </ligand>
</feature>
<feature type="binding site" evidence="1">
    <location>
        <position position="292"/>
    </location>
    <ligand>
        <name>Zn(2+)</name>
        <dbReference type="ChEBI" id="CHEBI:29105"/>
        <label>2</label>
    </ligand>
</feature>
<feature type="binding site" evidence="1">
    <location>
        <position position="298"/>
    </location>
    <ligand>
        <name>Zn(2+)</name>
        <dbReference type="ChEBI" id="CHEBI:29105"/>
        <label>1</label>
    </ligand>
</feature>
<feature type="binding site" evidence="1">
    <location>
        <position position="301"/>
    </location>
    <ligand>
        <name>Zn(2+)</name>
        <dbReference type="ChEBI" id="CHEBI:29105"/>
        <label>1</label>
    </ligand>
</feature>
<feature type="binding site" evidence="1">
    <location>
        <position position="314"/>
    </location>
    <ligand>
        <name>Zn(2+)</name>
        <dbReference type="ChEBI" id="CHEBI:29105"/>
        <label>2</label>
    </ligand>
</feature>
<feature type="binding site" evidence="1">
    <location>
        <position position="317"/>
    </location>
    <ligand>
        <name>Zn(2+)</name>
        <dbReference type="ChEBI" id="CHEBI:29105"/>
        <label>2</label>
    </ligand>
</feature>
<feature type="site" description="Histone H3K4me3 binding" evidence="1">
    <location>
        <position position="273"/>
    </location>
</feature>
<feature type="site" description="Histone H3K4me3 binding" evidence="1">
    <location>
        <position position="284"/>
    </location>
</feature>
<feature type="site" description="Histone H3K4me3 binding" evidence="1">
    <location>
        <position position="288"/>
    </location>
</feature>
<feature type="site" description="Histone H3K4me3 binding" evidence="1">
    <location>
        <position position="296"/>
    </location>
</feature>
<feature type="sequence conflict" description="In Ref. 1; BAD89149." evidence="7" ref="1">
    <location>
        <begin position="130"/>
        <end position="131"/>
    </location>
</feature>
<proteinExistence type="evidence at protein level"/>